<gene>
    <name evidence="1" type="primary">dnaJ</name>
    <name type="ordered locus">ABSDF3636</name>
</gene>
<name>DNAJ_ACIBS</name>
<reference key="1">
    <citation type="journal article" date="2008" name="PLoS ONE">
        <title>Comparative analysis of Acinetobacters: three genomes for three lifestyles.</title>
        <authorList>
            <person name="Vallenet D."/>
            <person name="Nordmann P."/>
            <person name="Barbe V."/>
            <person name="Poirel L."/>
            <person name="Mangenot S."/>
            <person name="Bataille E."/>
            <person name="Dossat C."/>
            <person name="Gas S."/>
            <person name="Kreimeyer A."/>
            <person name="Lenoble P."/>
            <person name="Oztas S."/>
            <person name="Poulain J."/>
            <person name="Segurens B."/>
            <person name="Robert C."/>
            <person name="Abergel C."/>
            <person name="Claverie J.-M."/>
            <person name="Raoult D."/>
            <person name="Medigue C."/>
            <person name="Weissenbach J."/>
            <person name="Cruveiller S."/>
        </authorList>
    </citation>
    <scope>NUCLEOTIDE SEQUENCE [LARGE SCALE GENOMIC DNA]</scope>
    <source>
        <strain>SDF</strain>
    </source>
</reference>
<feature type="chain" id="PRO_1000137650" description="Chaperone protein DnaJ">
    <location>
        <begin position="1"/>
        <end position="370"/>
    </location>
</feature>
<feature type="domain" description="J" evidence="1">
    <location>
        <begin position="5"/>
        <end position="70"/>
    </location>
</feature>
<feature type="repeat" description="CXXCXGXG motif">
    <location>
        <begin position="147"/>
        <end position="154"/>
    </location>
</feature>
<feature type="repeat" description="CXXCXGXG motif">
    <location>
        <begin position="164"/>
        <end position="171"/>
    </location>
</feature>
<feature type="repeat" description="CXXCXGXG motif">
    <location>
        <begin position="186"/>
        <end position="193"/>
    </location>
</feature>
<feature type="repeat" description="CXXCXGXG motif">
    <location>
        <begin position="200"/>
        <end position="207"/>
    </location>
</feature>
<feature type="zinc finger region" description="CR-type" evidence="1">
    <location>
        <begin position="134"/>
        <end position="212"/>
    </location>
</feature>
<feature type="region of interest" description="Disordered" evidence="2">
    <location>
        <begin position="351"/>
        <end position="370"/>
    </location>
</feature>
<feature type="binding site" evidence="1">
    <location>
        <position position="147"/>
    </location>
    <ligand>
        <name>Zn(2+)</name>
        <dbReference type="ChEBI" id="CHEBI:29105"/>
        <label>1</label>
    </ligand>
</feature>
<feature type="binding site" evidence="1">
    <location>
        <position position="150"/>
    </location>
    <ligand>
        <name>Zn(2+)</name>
        <dbReference type="ChEBI" id="CHEBI:29105"/>
        <label>1</label>
    </ligand>
</feature>
<feature type="binding site" evidence="1">
    <location>
        <position position="164"/>
    </location>
    <ligand>
        <name>Zn(2+)</name>
        <dbReference type="ChEBI" id="CHEBI:29105"/>
        <label>2</label>
    </ligand>
</feature>
<feature type="binding site" evidence="1">
    <location>
        <position position="167"/>
    </location>
    <ligand>
        <name>Zn(2+)</name>
        <dbReference type="ChEBI" id="CHEBI:29105"/>
        <label>2</label>
    </ligand>
</feature>
<feature type="binding site" evidence="1">
    <location>
        <position position="186"/>
    </location>
    <ligand>
        <name>Zn(2+)</name>
        <dbReference type="ChEBI" id="CHEBI:29105"/>
        <label>2</label>
    </ligand>
</feature>
<feature type="binding site" evidence="1">
    <location>
        <position position="189"/>
    </location>
    <ligand>
        <name>Zn(2+)</name>
        <dbReference type="ChEBI" id="CHEBI:29105"/>
        <label>2</label>
    </ligand>
</feature>
<feature type="binding site" evidence="1">
    <location>
        <position position="200"/>
    </location>
    <ligand>
        <name>Zn(2+)</name>
        <dbReference type="ChEBI" id="CHEBI:29105"/>
        <label>1</label>
    </ligand>
</feature>
<feature type="binding site" evidence="1">
    <location>
        <position position="203"/>
    </location>
    <ligand>
        <name>Zn(2+)</name>
        <dbReference type="ChEBI" id="CHEBI:29105"/>
        <label>1</label>
    </ligand>
</feature>
<keyword id="KW-0143">Chaperone</keyword>
<keyword id="KW-0963">Cytoplasm</keyword>
<keyword id="KW-0235">DNA replication</keyword>
<keyword id="KW-0479">Metal-binding</keyword>
<keyword id="KW-0677">Repeat</keyword>
<keyword id="KW-0346">Stress response</keyword>
<keyword id="KW-0862">Zinc</keyword>
<keyword id="KW-0863">Zinc-finger</keyword>
<organism>
    <name type="scientific">Acinetobacter baumannii (strain SDF)</name>
    <dbReference type="NCBI Taxonomy" id="509170"/>
    <lineage>
        <taxon>Bacteria</taxon>
        <taxon>Pseudomonadati</taxon>
        <taxon>Pseudomonadota</taxon>
        <taxon>Gammaproteobacteria</taxon>
        <taxon>Moraxellales</taxon>
        <taxon>Moraxellaceae</taxon>
        <taxon>Acinetobacter</taxon>
        <taxon>Acinetobacter calcoaceticus/baumannii complex</taxon>
    </lineage>
</organism>
<protein>
    <recommendedName>
        <fullName evidence="1">Chaperone protein DnaJ</fullName>
    </recommendedName>
</protein>
<accession>B0VQ00</accession>
<comment type="function">
    <text evidence="1">Participates actively in the response to hyperosmotic and heat shock by preventing the aggregation of stress-denatured proteins and by disaggregating proteins, also in an autonomous, DnaK-independent fashion. Unfolded proteins bind initially to DnaJ; upon interaction with the DnaJ-bound protein, DnaK hydrolyzes its bound ATP, resulting in the formation of a stable complex. GrpE releases ADP from DnaK; ATP binding to DnaK triggers the release of the substrate protein, thus completing the reaction cycle. Several rounds of ATP-dependent interactions between DnaJ, DnaK and GrpE are required for fully efficient folding. Also involved, together with DnaK and GrpE, in the DNA replication of plasmids through activation of initiation proteins.</text>
</comment>
<comment type="cofactor">
    <cofactor evidence="1">
        <name>Zn(2+)</name>
        <dbReference type="ChEBI" id="CHEBI:29105"/>
    </cofactor>
    <text evidence="1">Binds 2 Zn(2+) ions per monomer.</text>
</comment>
<comment type="subunit">
    <text evidence="1">Homodimer.</text>
</comment>
<comment type="subcellular location">
    <subcellularLocation>
        <location evidence="1">Cytoplasm</location>
    </subcellularLocation>
</comment>
<comment type="domain">
    <text evidence="1">The J domain is necessary and sufficient to stimulate DnaK ATPase activity. Zinc center 1 plays an important role in the autonomous, DnaK-independent chaperone activity of DnaJ. Zinc center 2 is essential for interaction with DnaK and for DnaJ activity.</text>
</comment>
<comment type="similarity">
    <text evidence="1">Belongs to the DnaJ family.</text>
</comment>
<dbReference type="EMBL" id="CU468230">
    <property type="protein sequence ID" value="CAP02891.1"/>
    <property type="molecule type" value="Genomic_DNA"/>
</dbReference>
<dbReference type="SMR" id="B0VQ00"/>
<dbReference type="KEGG" id="abm:ABSDF3636"/>
<dbReference type="HOGENOM" id="CLU_017633_0_7_6"/>
<dbReference type="Proteomes" id="UP000001741">
    <property type="component" value="Chromosome"/>
</dbReference>
<dbReference type="GO" id="GO:0005737">
    <property type="term" value="C:cytoplasm"/>
    <property type="evidence" value="ECO:0007669"/>
    <property type="project" value="UniProtKB-SubCell"/>
</dbReference>
<dbReference type="GO" id="GO:0005524">
    <property type="term" value="F:ATP binding"/>
    <property type="evidence" value="ECO:0007669"/>
    <property type="project" value="InterPro"/>
</dbReference>
<dbReference type="GO" id="GO:0031072">
    <property type="term" value="F:heat shock protein binding"/>
    <property type="evidence" value="ECO:0007669"/>
    <property type="project" value="InterPro"/>
</dbReference>
<dbReference type="GO" id="GO:0051082">
    <property type="term" value="F:unfolded protein binding"/>
    <property type="evidence" value="ECO:0007669"/>
    <property type="project" value="UniProtKB-UniRule"/>
</dbReference>
<dbReference type="GO" id="GO:0008270">
    <property type="term" value="F:zinc ion binding"/>
    <property type="evidence" value="ECO:0007669"/>
    <property type="project" value="UniProtKB-UniRule"/>
</dbReference>
<dbReference type="GO" id="GO:0051085">
    <property type="term" value="P:chaperone cofactor-dependent protein refolding"/>
    <property type="evidence" value="ECO:0007669"/>
    <property type="project" value="TreeGrafter"/>
</dbReference>
<dbReference type="GO" id="GO:0006260">
    <property type="term" value="P:DNA replication"/>
    <property type="evidence" value="ECO:0007669"/>
    <property type="project" value="UniProtKB-KW"/>
</dbReference>
<dbReference type="GO" id="GO:0042026">
    <property type="term" value="P:protein refolding"/>
    <property type="evidence" value="ECO:0007669"/>
    <property type="project" value="TreeGrafter"/>
</dbReference>
<dbReference type="GO" id="GO:0009408">
    <property type="term" value="P:response to heat"/>
    <property type="evidence" value="ECO:0007669"/>
    <property type="project" value="InterPro"/>
</dbReference>
<dbReference type="CDD" id="cd06257">
    <property type="entry name" value="DnaJ"/>
    <property type="match status" value="1"/>
</dbReference>
<dbReference type="CDD" id="cd10747">
    <property type="entry name" value="DnaJ_C"/>
    <property type="match status" value="1"/>
</dbReference>
<dbReference type="CDD" id="cd10719">
    <property type="entry name" value="DnaJ_zf"/>
    <property type="match status" value="1"/>
</dbReference>
<dbReference type="FunFam" id="1.10.287.110:FF:000034">
    <property type="entry name" value="Chaperone protein DnaJ"/>
    <property type="match status" value="1"/>
</dbReference>
<dbReference type="FunFam" id="2.10.230.10:FF:000002">
    <property type="entry name" value="Molecular chaperone DnaJ"/>
    <property type="match status" value="1"/>
</dbReference>
<dbReference type="FunFam" id="2.60.260.20:FF:000004">
    <property type="entry name" value="Molecular chaperone DnaJ"/>
    <property type="match status" value="1"/>
</dbReference>
<dbReference type="Gene3D" id="1.10.287.110">
    <property type="entry name" value="DnaJ domain"/>
    <property type="match status" value="1"/>
</dbReference>
<dbReference type="Gene3D" id="2.10.230.10">
    <property type="entry name" value="Heat shock protein DnaJ, cysteine-rich domain"/>
    <property type="match status" value="1"/>
</dbReference>
<dbReference type="Gene3D" id="2.60.260.20">
    <property type="entry name" value="Urease metallochaperone UreE, N-terminal domain"/>
    <property type="match status" value="2"/>
</dbReference>
<dbReference type="HAMAP" id="MF_01152">
    <property type="entry name" value="DnaJ"/>
    <property type="match status" value="1"/>
</dbReference>
<dbReference type="InterPro" id="IPR012724">
    <property type="entry name" value="DnaJ"/>
</dbReference>
<dbReference type="InterPro" id="IPR002939">
    <property type="entry name" value="DnaJ_C"/>
</dbReference>
<dbReference type="InterPro" id="IPR001623">
    <property type="entry name" value="DnaJ_domain"/>
</dbReference>
<dbReference type="InterPro" id="IPR018253">
    <property type="entry name" value="DnaJ_domain_CS"/>
</dbReference>
<dbReference type="InterPro" id="IPR008971">
    <property type="entry name" value="HSP40/DnaJ_pept-bd"/>
</dbReference>
<dbReference type="InterPro" id="IPR001305">
    <property type="entry name" value="HSP_DnaJ_Cys-rich_dom"/>
</dbReference>
<dbReference type="InterPro" id="IPR036410">
    <property type="entry name" value="HSP_DnaJ_Cys-rich_dom_sf"/>
</dbReference>
<dbReference type="InterPro" id="IPR036869">
    <property type="entry name" value="J_dom_sf"/>
</dbReference>
<dbReference type="NCBIfam" id="TIGR02349">
    <property type="entry name" value="DnaJ_bact"/>
    <property type="match status" value="1"/>
</dbReference>
<dbReference type="NCBIfam" id="NF008035">
    <property type="entry name" value="PRK10767.1"/>
    <property type="match status" value="1"/>
</dbReference>
<dbReference type="PANTHER" id="PTHR43096:SF48">
    <property type="entry name" value="CHAPERONE PROTEIN DNAJ"/>
    <property type="match status" value="1"/>
</dbReference>
<dbReference type="PANTHER" id="PTHR43096">
    <property type="entry name" value="DNAJ HOMOLOG 1, MITOCHONDRIAL-RELATED"/>
    <property type="match status" value="1"/>
</dbReference>
<dbReference type="Pfam" id="PF00226">
    <property type="entry name" value="DnaJ"/>
    <property type="match status" value="1"/>
</dbReference>
<dbReference type="Pfam" id="PF01556">
    <property type="entry name" value="DnaJ_C"/>
    <property type="match status" value="1"/>
</dbReference>
<dbReference type="Pfam" id="PF00684">
    <property type="entry name" value="DnaJ_CXXCXGXG"/>
    <property type="match status" value="1"/>
</dbReference>
<dbReference type="PRINTS" id="PR00625">
    <property type="entry name" value="JDOMAIN"/>
</dbReference>
<dbReference type="SMART" id="SM00271">
    <property type="entry name" value="DnaJ"/>
    <property type="match status" value="1"/>
</dbReference>
<dbReference type="SUPFAM" id="SSF46565">
    <property type="entry name" value="Chaperone J-domain"/>
    <property type="match status" value="1"/>
</dbReference>
<dbReference type="SUPFAM" id="SSF57938">
    <property type="entry name" value="DnaJ/Hsp40 cysteine-rich domain"/>
    <property type="match status" value="1"/>
</dbReference>
<dbReference type="SUPFAM" id="SSF49493">
    <property type="entry name" value="HSP40/DnaJ peptide-binding domain"/>
    <property type="match status" value="2"/>
</dbReference>
<dbReference type="PROSITE" id="PS00636">
    <property type="entry name" value="DNAJ_1"/>
    <property type="match status" value="1"/>
</dbReference>
<dbReference type="PROSITE" id="PS50076">
    <property type="entry name" value="DNAJ_2"/>
    <property type="match status" value="1"/>
</dbReference>
<dbReference type="PROSITE" id="PS51188">
    <property type="entry name" value="ZF_CR"/>
    <property type="match status" value="1"/>
</dbReference>
<proteinExistence type="inferred from homology"/>
<evidence type="ECO:0000255" key="1">
    <source>
        <dbReference type="HAMAP-Rule" id="MF_01152"/>
    </source>
</evidence>
<evidence type="ECO:0000256" key="2">
    <source>
        <dbReference type="SAM" id="MobiDB-lite"/>
    </source>
</evidence>
<sequence>MAKRDYYEVLGVSKTASDDEIKKAYRKLAMKYHPDRNPDNAEAEEKFKEASEAYEILSDSEKRSMYDRMGHNAFEGGFGGAGGGFGGFSAEDIFSQFGDIFGGAFGGGGRQQRQRRGSDLRYVMELTLEEAVKGVKKTITFTAPAPCDVCDGKGSKNPKDVETCKTCHGSGQVRMQQGFFSVQQTCGTCRGQGKIIKNPCHACHGSGVADRQQTLEVTIPAGVDNGDRVRLSGKGEAIRDGQAGDLYVEVVVREHEIFQRDGADLYMDVPVSIADAALGKEIEIPTLEGRVSLKIPEGTQTGKLFRLRGKGVRPVRSSMVGDLLCRIVVETPVNLTSRQRELLKELQASFDGEDSASSPKKKSFFDRLFD</sequence>